<dbReference type="EC" id="7.6.2.13" evidence="1"/>
<dbReference type="EMBL" id="BX571869">
    <property type="protein sequence ID" value="CAE15517.1"/>
    <property type="molecule type" value="Genomic_DNA"/>
</dbReference>
<dbReference type="RefSeq" id="WP_011147354.1">
    <property type="nucleotide sequence ID" value="NC_005126.1"/>
</dbReference>
<dbReference type="SMR" id="Q7N2D9"/>
<dbReference type="STRING" id="243265.plu3143"/>
<dbReference type="GeneID" id="48849402"/>
<dbReference type="KEGG" id="plu:plu3143"/>
<dbReference type="eggNOG" id="COG1129">
    <property type="taxonomic scope" value="Bacteria"/>
</dbReference>
<dbReference type="HOGENOM" id="CLU_000604_92_1_6"/>
<dbReference type="OrthoDB" id="9776369at2"/>
<dbReference type="Proteomes" id="UP000002514">
    <property type="component" value="Chromosome"/>
</dbReference>
<dbReference type="GO" id="GO:0005886">
    <property type="term" value="C:plasma membrane"/>
    <property type="evidence" value="ECO:0007669"/>
    <property type="project" value="UniProtKB-SubCell"/>
</dbReference>
<dbReference type="GO" id="GO:0005524">
    <property type="term" value="F:ATP binding"/>
    <property type="evidence" value="ECO:0007669"/>
    <property type="project" value="UniProtKB-KW"/>
</dbReference>
<dbReference type="GO" id="GO:0016887">
    <property type="term" value="F:ATP hydrolysis activity"/>
    <property type="evidence" value="ECO:0007669"/>
    <property type="project" value="InterPro"/>
</dbReference>
<dbReference type="CDD" id="cd03216">
    <property type="entry name" value="ABC_Carb_Monos_I"/>
    <property type="match status" value="1"/>
</dbReference>
<dbReference type="CDD" id="cd03215">
    <property type="entry name" value="ABC_Carb_Monos_II"/>
    <property type="match status" value="1"/>
</dbReference>
<dbReference type="Gene3D" id="3.40.50.300">
    <property type="entry name" value="P-loop containing nucleotide triphosphate hydrolases"/>
    <property type="match status" value="2"/>
</dbReference>
<dbReference type="InterPro" id="IPR003593">
    <property type="entry name" value="AAA+_ATPase"/>
</dbReference>
<dbReference type="InterPro" id="IPR050107">
    <property type="entry name" value="ABC_carbohydrate_import_ATPase"/>
</dbReference>
<dbReference type="InterPro" id="IPR003439">
    <property type="entry name" value="ABC_transporter-like_ATP-bd"/>
</dbReference>
<dbReference type="InterPro" id="IPR017871">
    <property type="entry name" value="ABC_transporter-like_CS"/>
</dbReference>
<dbReference type="InterPro" id="IPR027417">
    <property type="entry name" value="P-loop_NTPase"/>
</dbReference>
<dbReference type="NCBIfam" id="NF011967">
    <property type="entry name" value="PRK15439.1"/>
    <property type="match status" value="1"/>
</dbReference>
<dbReference type="PANTHER" id="PTHR43790:SF2">
    <property type="entry name" value="AUTOINDUCER 2 IMPORT ATP-BINDING PROTEIN LSRA"/>
    <property type="match status" value="1"/>
</dbReference>
<dbReference type="PANTHER" id="PTHR43790">
    <property type="entry name" value="CARBOHYDRATE TRANSPORT ATP-BINDING PROTEIN MG119-RELATED"/>
    <property type="match status" value="1"/>
</dbReference>
<dbReference type="Pfam" id="PF00005">
    <property type="entry name" value="ABC_tran"/>
    <property type="match status" value="2"/>
</dbReference>
<dbReference type="SMART" id="SM00382">
    <property type="entry name" value="AAA"/>
    <property type="match status" value="2"/>
</dbReference>
<dbReference type="SUPFAM" id="SSF52540">
    <property type="entry name" value="P-loop containing nucleoside triphosphate hydrolases"/>
    <property type="match status" value="2"/>
</dbReference>
<dbReference type="PROSITE" id="PS00211">
    <property type="entry name" value="ABC_TRANSPORTER_1"/>
    <property type="match status" value="1"/>
</dbReference>
<dbReference type="PROSITE" id="PS50893">
    <property type="entry name" value="ABC_TRANSPORTER_2"/>
    <property type="match status" value="2"/>
</dbReference>
<organism>
    <name type="scientific">Photorhabdus laumondii subsp. laumondii (strain DSM 15139 / CIP 105565 / TT01)</name>
    <name type="common">Photorhabdus luminescens subsp. laumondii</name>
    <dbReference type="NCBI Taxonomy" id="243265"/>
    <lineage>
        <taxon>Bacteria</taxon>
        <taxon>Pseudomonadati</taxon>
        <taxon>Pseudomonadota</taxon>
        <taxon>Gammaproteobacteria</taxon>
        <taxon>Enterobacterales</taxon>
        <taxon>Morganellaceae</taxon>
        <taxon>Photorhabdus</taxon>
    </lineage>
</organism>
<sequence length="511" mass="56143">MLHNNTAVPPLLEVSGISKQFSGVMVLKHIDFTLFPGQIQALLGGNGAGKSTLMKIIAGLEQPDKGTLKISGHHVSHLNPTKAHQFGIYLIPQEPLLFPNLSVQENILFRLPKHQVDKSKMKQLLALLGCQLDLHVSAGSLNVADQQLVEIMRGLMRNSKILILDEPTASLTPVETERLFAQLRELQQQGVGIIFISHKIPEIYQLADQVSVMRDGTIALSGKIRDYTTDDIIQAITPAAKDQPLNGTPKLGLDLSNNQHQTVPDRPILTVTKLSGEGFSNISFSVKPGEILGLAGVVGAGRTELAETLYGLRPAVSGEIKLKQHTVNGLKTAQRLAQGLVYLPEDRQSSGLFLDSSLGWNICSLTHNRNTFWIRPAYDTAVLERYCQILNIKFSHINQPIKTLSGGNQQKILIAKCLEAHPAVLIIDEPTRGVDVAARNDIYQLIRHIAQQQVAIIFISSDLDEVVRIADRVLVMHQGEINGELTKQQMDVDTIMHIAFGEHKPQQAASC</sequence>
<comment type="function">
    <text evidence="1">Part of the ABC transporter complex LsrABCD involved in autoinducer 2 (AI-2) import. Responsible for energy coupling to the transport system.</text>
</comment>
<comment type="catalytic activity">
    <reaction evidence="1">
        <text>ATP + H2O + (2R,4S)-2-methyl-2,3,3,4-tetrahydroxytetrahydrofuran-[AI-2-binding protein]Side 1 = ADP + phosphate + (2R,4S)-2-methyl-2,3,3,4-tetrahydroxytetrahydrofuranSide 2 + [AI-2-binding protein]Side 1.</text>
        <dbReference type="EC" id="7.6.2.13"/>
    </reaction>
</comment>
<comment type="subunit">
    <text evidence="1">The complex is composed of two ATP-binding proteins (LsrA), two transmembrane proteins (LsrC and LsrD) and a solute-binding protein (LsrB).</text>
</comment>
<comment type="subcellular location">
    <subcellularLocation>
        <location evidence="1">Cell inner membrane</location>
        <topology evidence="1">Peripheral membrane protein</topology>
    </subcellularLocation>
</comment>
<comment type="similarity">
    <text evidence="3">Belongs to the ABC transporter superfamily. AI-2 autoinducer porter (TC 3.A.1.2.8) family.</text>
</comment>
<evidence type="ECO:0000250" key="1">
    <source>
        <dbReference type="UniProtKB" id="P77257"/>
    </source>
</evidence>
<evidence type="ECO:0000255" key="2">
    <source>
        <dbReference type="PROSITE-ProRule" id="PRU00434"/>
    </source>
</evidence>
<evidence type="ECO:0000305" key="3"/>
<name>LSRA_PHOLL</name>
<feature type="chain" id="PRO_0000351298" description="Autoinducer 2 import ATP-binding protein LsrA">
    <location>
        <begin position="1"/>
        <end position="511"/>
    </location>
</feature>
<feature type="domain" description="ABC transporter 1" evidence="2">
    <location>
        <begin position="12"/>
        <end position="240"/>
    </location>
</feature>
<feature type="domain" description="ABC transporter 2" evidence="2">
    <location>
        <begin position="263"/>
        <end position="503"/>
    </location>
</feature>
<feature type="binding site" evidence="2">
    <location>
        <begin position="44"/>
        <end position="51"/>
    </location>
    <ligand>
        <name>ATP</name>
        <dbReference type="ChEBI" id="CHEBI:30616"/>
    </ligand>
</feature>
<reference key="1">
    <citation type="journal article" date="2003" name="Nat. Biotechnol.">
        <title>The genome sequence of the entomopathogenic bacterium Photorhabdus luminescens.</title>
        <authorList>
            <person name="Duchaud E."/>
            <person name="Rusniok C."/>
            <person name="Frangeul L."/>
            <person name="Buchrieser C."/>
            <person name="Givaudan A."/>
            <person name="Taourit S."/>
            <person name="Bocs S."/>
            <person name="Boursaux-Eude C."/>
            <person name="Chandler M."/>
            <person name="Charles J.-F."/>
            <person name="Dassa E."/>
            <person name="Derose R."/>
            <person name="Derzelle S."/>
            <person name="Freyssinet G."/>
            <person name="Gaudriault S."/>
            <person name="Medigue C."/>
            <person name="Lanois A."/>
            <person name="Powell K."/>
            <person name="Siguier P."/>
            <person name="Vincent R."/>
            <person name="Wingate V."/>
            <person name="Zouine M."/>
            <person name="Glaser P."/>
            <person name="Boemare N."/>
            <person name="Danchin A."/>
            <person name="Kunst F."/>
        </authorList>
    </citation>
    <scope>NUCLEOTIDE SEQUENCE [LARGE SCALE GENOMIC DNA]</scope>
    <source>
        <strain>DSM 15139 / CIP 105565 / TT01</strain>
    </source>
</reference>
<keyword id="KW-0067">ATP-binding</keyword>
<keyword id="KW-0997">Cell inner membrane</keyword>
<keyword id="KW-1003">Cell membrane</keyword>
<keyword id="KW-0472">Membrane</keyword>
<keyword id="KW-0547">Nucleotide-binding</keyword>
<keyword id="KW-1185">Reference proteome</keyword>
<keyword id="KW-0677">Repeat</keyword>
<keyword id="KW-1278">Translocase</keyword>
<keyword id="KW-0813">Transport</keyword>
<accession>Q7N2D9</accession>
<proteinExistence type="inferred from homology"/>
<protein>
    <recommendedName>
        <fullName evidence="1">Autoinducer 2 import ATP-binding protein LsrA</fullName>
        <shortName evidence="1">AI-2 import ATP-binding protein LsrA</shortName>
        <ecNumber evidence="1">7.6.2.13</ecNumber>
    </recommendedName>
</protein>
<gene>
    <name type="primary">lsrA</name>
    <name type="ordered locus">plu3143</name>
</gene>